<proteinExistence type="inferred from homology"/>
<accession>Q4UK49</accession>
<evidence type="ECO:0000255" key="1">
    <source>
        <dbReference type="HAMAP-Rule" id="MF_01815"/>
    </source>
</evidence>
<name>FABH_RICFE</name>
<comment type="function">
    <text evidence="1">Catalyzes the condensation reaction of fatty acid synthesis by the addition to an acyl acceptor of two carbons from malonyl-ACP. Catalyzes the first condensation reaction which initiates fatty acid synthesis and may therefore play a role in governing the total rate of fatty acid production. Possesses both acetoacetyl-ACP synthase and acetyl transacylase activities. Its substrate specificity determines the biosynthesis of branched-chain and/or straight-chain of fatty acids.</text>
</comment>
<comment type="catalytic activity">
    <reaction evidence="1">
        <text>malonyl-[ACP] + acetyl-CoA + H(+) = 3-oxobutanoyl-[ACP] + CO2 + CoA</text>
        <dbReference type="Rhea" id="RHEA:12080"/>
        <dbReference type="Rhea" id="RHEA-COMP:9623"/>
        <dbReference type="Rhea" id="RHEA-COMP:9625"/>
        <dbReference type="ChEBI" id="CHEBI:15378"/>
        <dbReference type="ChEBI" id="CHEBI:16526"/>
        <dbReference type="ChEBI" id="CHEBI:57287"/>
        <dbReference type="ChEBI" id="CHEBI:57288"/>
        <dbReference type="ChEBI" id="CHEBI:78449"/>
        <dbReference type="ChEBI" id="CHEBI:78450"/>
        <dbReference type="EC" id="2.3.1.180"/>
    </reaction>
</comment>
<comment type="pathway">
    <text evidence="1">Lipid metabolism; fatty acid biosynthesis.</text>
</comment>
<comment type="subunit">
    <text evidence="1">Homodimer.</text>
</comment>
<comment type="subcellular location">
    <subcellularLocation>
        <location evidence="1">Cytoplasm</location>
    </subcellularLocation>
</comment>
<comment type="domain">
    <text evidence="1">The last Arg residue of the ACP-binding site is essential for the weak association between ACP/AcpP and FabH.</text>
</comment>
<comment type="similarity">
    <text evidence="1">Belongs to the thiolase-like superfamily. FabH family.</text>
</comment>
<sequence length="317" mass="34206">MTCKIIGSGGYLPSKIVSNDELAKFVDTNDEWIRTRTGITQRHIAGDTEYTSHLALKSAEKAIADARVSVNDIDLIITCTTTPDNSFPSVASKLQGYLGLTNIPSFDLQAVCAGFVYGLQVANSLIASGKYKTVLLIGAEKMTSLLDWSDRSTCVLFGDGAGSVILQRSSDDSGLIDSNIFSSGADYEILYTNGGVSMNGISGKIVMQGQKLFRHAIEKMQQSIEDLLHANQFSVSDIDYFIPHQANIRIINKLAELLNIEEHKVVKTVEKHANCSAASIPLALSTLKASGKIKKGDILLFSAIGAGLTWGSALIRW</sequence>
<keyword id="KW-0012">Acyltransferase</keyword>
<keyword id="KW-0963">Cytoplasm</keyword>
<keyword id="KW-0275">Fatty acid biosynthesis</keyword>
<keyword id="KW-0276">Fatty acid metabolism</keyword>
<keyword id="KW-0444">Lipid biosynthesis</keyword>
<keyword id="KW-0443">Lipid metabolism</keyword>
<keyword id="KW-0511">Multifunctional enzyme</keyword>
<keyword id="KW-0808">Transferase</keyword>
<protein>
    <recommendedName>
        <fullName evidence="1">Beta-ketoacyl-[acyl-carrier-protein] synthase III</fullName>
        <shortName evidence="1">Beta-ketoacyl-ACP synthase III</shortName>
        <shortName evidence="1">KAS III</shortName>
        <ecNumber evidence="1">2.3.1.180</ecNumber>
    </recommendedName>
    <alternativeName>
        <fullName evidence="1">3-oxoacyl-[acyl-carrier-protein] synthase 3</fullName>
    </alternativeName>
    <alternativeName>
        <fullName evidence="1">3-oxoacyl-[acyl-carrier-protein] synthase III</fullName>
    </alternativeName>
</protein>
<organism>
    <name type="scientific">Rickettsia felis (strain ATCC VR-1525 / URRWXCal2)</name>
    <name type="common">Rickettsia azadi</name>
    <dbReference type="NCBI Taxonomy" id="315456"/>
    <lineage>
        <taxon>Bacteria</taxon>
        <taxon>Pseudomonadati</taxon>
        <taxon>Pseudomonadota</taxon>
        <taxon>Alphaproteobacteria</taxon>
        <taxon>Rickettsiales</taxon>
        <taxon>Rickettsiaceae</taxon>
        <taxon>Rickettsieae</taxon>
        <taxon>Rickettsia</taxon>
        <taxon>spotted fever group</taxon>
    </lineage>
</organism>
<feature type="chain" id="PRO_0000272376" description="Beta-ketoacyl-[acyl-carrier-protein] synthase III">
    <location>
        <begin position="1"/>
        <end position="317"/>
    </location>
</feature>
<feature type="region of interest" description="ACP-binding" evidence="1">
    <location>
        <begin position="245"/>
        <end position="249"/>
    </location>
</feature>
<feature type="active site" evidence="1">
    <location>
        <position position="112"/>
    </location>
</feature>
<feature type="active site" evidence="1">
    <location>
        <position position="244"/>
    </location>
</feature>
<feature type="active site" evidence="1">
    <location>
        <position position="274"/>
    </location>
</feature>
<reference key="1">
    <citation type="journal article" date="2005" name="PLoS Biol.">
        <title>The genome sequence of Rickettsia felis identifies the first putative conjugative plasmid in an obligate intracellular parasite.</title>
        <authorList>
            <person name="Ogata H."/>
            <person name="Renesto P."/>
            <person name="Audic S."/>
            <person name="Robert C."/>
            <person name="Blanc G."/>
            <person name="Fournier P.-E."/>
            <person name="Parinello H."/>
            <person name="Claverie J.-M."/>
            <person name="Raoult D."/>
        </authorList>
    </citation>
    <scope>NUCLEOTIDE SEQUENCE [LARGE SCALE GENOMIC DNA]</scope>
    <source>
        <strain>ATCC VR-1525 / URRWXCal2</strain>
    </source>
</reference>
<gene>
    <name evidence="1" type="primary">fabH</name>
    <name type="ordered locus">RF_1235</name>
</gene>
<dbReference type="EC" id="2.3.1.180" evidence="1"/>
<dbReference type="EMBL" id="CP000053">
    <property type="protein sequence ID" value="AAY62086.1"/>
    <property type="molecule type" value="Genomic_DNA"/>
</dbReference>
<dbReference type="SMR" id="Q4UK49"/>
<dbReference type="STRING" id="315456.RF_1235"/>
<dbReference type="KEGG" id="rfe:RF_1235"/>
<dbReference type="eggNOG" id="COG0332">
    <property type="taxonomic scope" value="Bacteria"/>
</dbReference>
<dbReference type="HOGENOM" id="CLU_039592_3_1_5"/>
<dbReference type="OrthoDB" id="9815506at2"/>
<dbReference type="UniPathway" id="UPA00094"/>
<dbReference type="Proteomes" id="UP000008548">
    <property type="component" value="Chromosome"/>
</dbReference>
<dbReference type="GO" id="GO:0005737">
    <property type="term" value="C:cytoplasm"/>
    <property type="evidence" value="ECO:0007669"/>
    <property type="project" value="UniProtKB-SubCell"/>
</dbReference>
<dbReference type="GO" id="GO:0004315">
    <property type="term" value="F:3-oxoacyl-[acyl-carrier-protein] synthase activity"/>
    <property type="evidence" value="ECO:0007669"/>
    <property type="project" value="InterPro"/>
</dbReference>
<dbReference type="GO" id="GO:0033818">
    <property type="term" value="F:beta-ketoacyl-acyl-carrier-protein synthase III activity"/>
    <property type="evidence" value="ECO:0007669"/>
    <property type="project" value="UniProtKB-UniRule"/>
</dbReference>
<dbReference type="GO" id="GO:0006633">
    <property type="term" value="P:fatty acid biosynthetic process"/>
    <property type="evidence" value="ECO:0007669"/>
    <property type="project" value="UniProtKB-UniRule"/>
</dbReference>
<dbReference type="CDD" id="cd00830">
    <property type="entry name" value="KAS_III"/>
    <property type="match status" value="1"/>
</dbReference>
<dbReference type="FunFam" id="3.40.47.10:FF:000004">
    <property type="entry name" value="3-oxoacyl-[acyl-carrier-protein] synthase 3"/>
    <property type="match status" value="1"/>
</dbReference>
<dbReference type="Gene3D" id="3.40.47.10">
    <property type="match status" value="1"/>
</dbReference>
<dbReference type="HAMAP" id="MF_01815">
    <property type="entry name" value="FabH"/>
    <property type="match status" value="1"/>
</dbReference>
<dbReference type="InterPro" id="IPR013747">
    <property type="entry name" value="ACP_syn_III_C"/>
</dbReference>
<dbReference type="InterPro" id="IPR013751">
    <property type="entry name" value="ACP_syn_III_N"/>
</dbReference>
<dbReference type="InterPro" id="IPR004655">
    <property type="entry name" value="FabH"/>
</dbReference>
<dbReference type="InterPro" id="IPR016039">
    <property type="entry name" value="Thiolase-like"/>
</dbReference>
<dbReference type="NCBIfam" id="TIGR00747">
    <property type="entry name" value="fabH"/>
    <property type="match status" value="1"/>
</dbReference>
<dbReference type="NCBIfam" id="NF006829">
    <property type="entry name" value="PRK09352.1"/>
    <property type="match status" value="1"/>
</dbReference>
<dbReference type="PANTHER" id="PTHR43091">
    <property type="entry name" value="3-OXOACYL-[ACYL-CARRIER-PROTEIN] SYNTHASE"/>
    <property type="match status" value="1"/>
</dbReference>
<dbReference type="PANTHER" id="PTHR43091:SF1">
    <property type="entry name" value="BETA-KETOACYL-[ACYL-CARRIER-PROTEIN] SYNTHASE III, CHLOROPLASTIC"/>
    <property type="match status" value="1"/>
</dbReference>
<dbReference type="Pfam" id="PF08545">
    <property type="entry name" value="ACP_syn_III"/>
    <property type="match status" value="1"/>
</dbReference>
<dbReference type="Pfam" id="PF08541">
    <property type="entry name" value="ACP_syn_III_C"/>
    <property type="match status" value="1"/>
</dbReference>
<dbReference type="SUPFAM" id="SSF53901">
    <property type="entry name" value="Thiolase-like"/>
    <property type="match status" value="1"/>
</dbReference>